<evidence type="ECO:0000250" key="1">
    <source>
        <dbReference type="UniProtKB" id="Q9M156"/>
    </source>
</evidence>
<evidence type="ECO:0000269" key="2">
    <source>
    </source>
</evidence>
<evidence type="ECO:0000303" key="3">
    <source>
    </source>
</evidence>
<evidence type="ECO:0000305" key="4"/>
<gene>
    <name evidence="3" type="primary">UGT73C4</name>
    <name evidence="4" type="ordered locus">Solyc10g085880.1.1</name>
</gene>
<reference key="1">
    <citation type="journal article" date="2012" name="Nature">
        <title>The tomato genome sequence provides insights into fleshy fruit evolution.</title>
        <authorList>
            <consortium name="Tomato Genome Consortium"/>
        </authorList>
    </citation>
    <scope>NUCLEOTIDE SEQUENCE [LARGE SCALE GENOMIC DNA]</scope>
    <source>
        <strain>cv. Heinz 1706</strain>
    </source>
</reference>
<reference key="2">
    <citation type="journal article" date="2017" name="Plant J.">
        <title>Suppressing ABA uridine diphosphate glucosyltransferase (SlUGT75C1) alters fruit ripening and the stress response in tomato.</title>
        <authorList>
            <person name="Sun Y."/>
            <person name="Ji K."/>
            <person name="Liang B."/>
            <person name="Du Y."/>
            <person name="Jiang L."/>
            <person name="Wang J."/>
            <person name="Kai W."/>
            <person name="Zhang Y."/>
            <person name="Zhai X."/>
            <person name="Chen P."/>
            <person name="Wang H."/>
            <person name="Leng P."/>
        </authorList>
    </citation>
    <scope>FUNCTION</scope>
    <scope>DEVELOPMENTAL STAGE</scope>
    <scope>TISSUE SPECIFICITY</scope>
    <scope>SUBCELLULAR LOCATION</scope>
    <source>
        <strain>cv. MicroTom</strain>
    </source>
</reference>
<proteinExistence type="evidence at transcript level"/>
<sequence>MGCFSLLCLHNLKDWEGLEKIESDTEYFRVPGLFDKIELTKNQLGNAARPRNEEWRVMSEKMKKAEEEAYGMVVNTFEDLEKEYIEGLMNAKNKKIWTIGPVSLCNKEKQDKAERGNEAAIDEHKCLNWLDSWEQNSVLFVCLGSLSRLSTSQMVELGLGLESSRRPFIWVVRHMSDEFKNWLVEEDFEERVKGQGLLIRGWAPQVLLLSHPSIGAFLTHCGWNSSLEGITAGVAMITWPMFAEQFCNERLIVDVLKTGVRSGIERQVMFGEEEKLGTQVSKDDIKKVIEQVMDEEMEGEMRRKRAKELGEKAKRAMEEEGSSHFNLTQLIQDVTEQAKILKPM</sequence>
<comment type="function">
    <text evidence="2">Probable glucosyltransferase that cannot glycosylate abscisic acid (ABA) and auxin (IAA).</text>
</comment>
<comment type="subcellular location">
    <subcellularLocation>
        <location evidence="2">Cytoplasm</location>
    </subcellularLocation>
    <subcellularLocation>
        <location evidence="2">Nucleus</location>
    </subcellularLocation>
</comment>
<comment type="tissue specificity">
    <text evidence="2">Expressed in flowers and fruits.</text>
</comment>
<comment type="developmental stage">
    <text evidence="2">Highly expressed during fruit ripening and flower development.</text>
</comment>
<comment type="similarity">
    <text evidence="4">Belongs to the UDP-glycosyltransferase family.</text>
</comment>
<protein>
    <recommendedName>
        <fullName evidence="3">UDP-glycosyltransferase 73C4</fullName>
        <shortName evidence="3">SlUGT73C4</shortName>
        <ecNumber evidence="4">2.4.1.-</ecNumber>
    </recommendedName>
</protein>
<dbReference type="EC" id="2.4.1.-" evidence="4"/>
<dbReference type="EMBL" id="CM001073">
    <property type="status" value="NOT_ANNOTATED_CDS"/>
    <property type="molecule type" value="Genomic_DNA"/>
</dbReference>
<dbReference type="SMR" id="K4D422"/>
<dbReference type="STRING" id="4081.K4D422"/>
<dbReference type="PaxDb" id="4081-Solyc10g085880.1.1"/>
<dbReference type="eggNOG" id="KOG1192">
    <property type="taxonomic scope" value="Eukaryota"/>
</dbReference>
<dbReference type="HOGENOM" id="CLU_001724_2_2_1"/>
<dbReference type="InParanoid" id="K4D422"/>
<dbReference type="PhylomeDB" id="K4D422"/>
<dbReference type="Proteomes" id="UP000004994">
    <property type="component" value="Unplaced"/>
</dbReference>
<dbReference type="ExpressionAtlas" id="K4D422">
    <property type="expression patterns" value="baseline and differential"/>
</dbReference>
<dbReference type="GO" id="GO:0005737">
    <property type="term" value="C:cytoplasm"/>
    <property type="evidence" value="ECO:0000314"/>
    <property type="project" value="UniProtKB"/>
</dbReference>
<dbReference type="GO" id="GO:0005634">
    <property type="term" value="C:nucleus"/>
    <property type="evidence" value="ECO:0000314"/>
    <property type="project" value="UniProtKB"/>
</dbReference>
<dbReference type="GO" id="GO:0035251">
    <property type="term" value="F:UDP-glucosyltransferase activity"/>
    <property type="evidence" value="ECO:0000318"/>
    <property type="project" value="GO_Central"/>
</dbReference>
<dbReference type="CDD" id="cd03784">
    <property type="entry name" value="GT1_Gtf-like"/>
    <property type="match status" value="1"/>
</dbReference>
<dbReference type="FunFam" id="3.40.50.2000:FF:000047">
    <property type="entry name" value="Glycosyltransferase"/>
    <property type="match status" value="1"/>
</dbReference>
<dbReference type="Gene3D" id="3.40.50.2000">
    <property type="entry name" value="Glycogen Phosphorylase B"/>
    <property type="match status" value="2"/>
</dbReference>
<dbReference type="InterPro" id="IPR002213">
    <property type="entry name" value="UDP_glucos_trans"/>
</dbReference>
<dbReference type="PANTHER" id="PTHR48047">
    <property type="entry name" value="GLYCOSYLTRANSFERASE"/>
    <property type="match status" value="1"/>
</dbReference>
<dbReference type="PANTHER" id="PTHR48047:SF159">
    <property type="entry name" value="UDP-GLYCOSYLTRANSFERASE 73C4"/>
    <property type="match status" value="1"/>
</dbReference>
<dbReference type="Pfam" id="PF00201">
    <property type="entry name" value="UDPGT"/>
    <property type="match status" value="1"/>
</dbReference>
<dbReference type="SUPFAM" id="SSF53756">
    <property type="entry name" value="UDP-Glycosyltransferase/glycogen phosphorylase"/>
    <property type="match status" value="1"/>
</dbReference>
<organism>
    <name type="scientific">Solanum lycopersicum</name>
    <name type="common">Tomato</name>
    <name type="synonym">Lycopersicon esculentum</name>
    <dbReference type="NCBI Taxonomy" id="4081"/>
    <lineage>
        <taxon>Eukaryota</taxon>
        <taxon>Viridiplantae</taxon>
        <taxon>Streptophyta</taxon>
        <taxon>Embryophyta</taxon>
        <taxon>Tracheophyta</taxon>
        <taxon>Spermatophyta</taxon>
        <taxon>Magnoliopsida</taxon>
        <taxon>eudicotyledons</taxon>
        <taxon>Gunneridae</taxon>
        <taxon>Pentapetalae</taxon>
        <taxon>asterids</taxon>
        <taxon>lamiids</taxon>
        <taxon>Solanales</taxon>
        <taxon>Solanaceae</taxon>
        <taxon>Solanoideae</taxon>
        <taxon>Solaneae</taxon>
        <taxon>Solanum</taxon>
        <taxon>Solanum subgen. Lycopersicon</taxon>
    </lineage>
</organism>
<accession>K4D422</accession>
<keyword id="KW-0963">Cytoplasm</keyword>
<keyword id="KW-0328">Glycosyltransferase</keyword>
<keyword id="KW-0539">Nucleus</keyword>
<keyword id="KW-1185">Reference proteome</keyword>
<keyword id="KW-0808">Transferase</keyword>
<feature type="chain" id="PRO_0000445698" description="UDP-glycosyltransferase 73C4">
    <location>
        <begin position="1"/>
        <end position="344"/>
    </location>
</feature>
<feature type="binding site" evidence="1">
    <location>
        <position position="145"/>
    </location>
    <ligand>
        <name>UDP-alpha-D-glucose</name>
        <dbReference type="ChEBI" id="CHEBI:58885"/>
    </ligand>
</feature>
<feature type="binding site" evidence="1">
    <location>
        <begin position="202"/>
        <end position="203"/>
    </location>
    <ligand>
        <name>UDP-alpha-D-glucose</name>
        <dbReference type="ChEBI" id="CHEBI:58885"/>
    </ligand>
</feature>
<feature type="binding site" evidence="1">
    <location>
        <begin position="220"/>
        <end position="228"/>
    </location>
    <ligand>
        <name>UDP-alpha-D-glucose</name>
        <dbReference type="ChEBI" id="CHEBI:58885"/>
    </ligand>
</feature>
<feature type="binding site" evidence="1">
    <location>
        <begin position="242"/>
        <end position="245"/>
    </location>
    <ligand>
        <name>UDP-alpha-D-glucose</name>
        <dbReference type="ChEBI" id="CHEBI:58885"/>
    </ligand>
</feature>
<name>U73C4_SOLLC</name>